<keyword id="KW-1003">Cell membrane</keyword>
<keyword id="KW-1015">Disulfide bond</keyword>
<keyword id="KW-0297">G-protein coupled receptor</keyword>
<keyword id="KW-0325">Glycoprotein</keyword>
<keyword id="KW-0472">Membrane</keyword>
<keyword id="KW-1267">Proteomics identification</keyword>
<keyword id="KW-0675">Receptor</keyword>
<keyword id="KW-1185">Reference proteome</keyword>
<keyword id="KW-0807">Transducer</keyword>
<keyword id="KW-0812">Transmembrane</keyword>
<keyword id="KW-1133">Transmembrane helix</keyword>
<protein>
    <recommendedName>
        <fullName>Probable G-protein coupled receptor 32</fullName>
    </recommendedName>
</protein>
<evidence type="ECO:0000255" key="1"/>
<evidence type="ECO:0000255" key="2">
    <source>
        <dbReference type="PROSITE-ProRule" id="PRU00521"/>
    </source>
</evidence>
<evidence type="ECO:0000269" key="3">
    <source>
    </source>
</evidence>
<evidence type="ECO:0000269" key="4">
    <source>
    </source>
</evidence>
<evidence type="ECO:0000269" key="5">
    <source>
    </source>
</evidence>
<evidence type="ECO:0000305" key="6"/>
<dbReference type="EMBL" id="AF045764">
    <property type="protein sequence ID" value="AAC39801.1"/>
    <property type="molecule type" value="Genomic_DNA"/>
</dbReference>
<dbReference type="EMBL" id="BC067453">
    <property type="protein sequence ID" value="AAH67453.1"/>
    <property type="molecule type" value="mRNA"/>
</dbReference>
<dbReference type="EMBL" id="BC067454">
    <property type="protein sequence ID" value="AAH67454.1"/>
    <property type="molecule type" value="mRNA"/>
</dbReference>
<dbReference type="EMBL" id="BC095544">
    <property type="protein sequence ID" value="AAH95544.1"/>
    <property type="molecule type" value="mRNA"/>
</dbReference>
<dbReference type="CCDS" id="CCDS12801.1"/>
<dbReference type="RefSeq" id="NP_001497.1">
    <property type="nucleotide sequence ID" value="NM_001506.2"/>
</dbReference>
<dbReference type="SMR" id="O75388"/>
<dbReference type="FunCoup" id="O75388">
    <property type="interactions" value="74"/>
</dbReference>
<dbReference type="STRING" id="9606.ENSP00000270590"/>
<dbReference type="ChEMBL" id="CHEMBL4523863"/>
<dbReference type="GuidetoPHARMACOLOGY" id="99"/>
<dbReference type="GlyCosmos" id="O75388">
    <property type="glycosylation" value="2 sites, No reported glycans"/>
</dbReference>
<dbReference type="GlyGen" id="O75388">
    <property type="glycosylation" value="2 sites"/>
</dbReference>
<dbReference type="iPTMnet" id="O75388"/>
<dbReference type="PhosphoSitePlus" id="O75388"/>
<dbReference type="BioMuta" id="GPR32"/>
<dbReference type="PaxDb" id="9606-ENSP00000270590"/>
<dbReference type="PeptideAtlas" id="O75388"/>
<dbReference type="Antibodypedia" id="18901">
    <property type="antibodies" value="288 antibodies from 29 providers"/>
</dbReference>
<dbReference type="DNASU" id="2854"/>
<dbReference type="Ensembl" id="ENST00000270590.4">
    <property type="protein sequence ID" value="ENSP00000270590.3"/>
    <property type="gene ID" value="ENSG00000142511.4"/>
</dbReference>
<dbReference type="GeneID" id="2854"/>
<dbReference type="KEGG" id="hsa:2854"/>
<dbReference type="MANE-Select" id="ENST00000270590.4">
    <property type="protein sequence ID" value="ENSP00000270590.3"/>
    <property type="RefSeq nucleotide sequence ID" value="NM_001506.2"/>
    <property type="RefSeq protein sequence ID" value="NP_001497.1"/>
</dbReference>
<dbReference type="UCSC" id="uc010ycf.3">
    <property type="organism name" value="human"/>
</dbReference>
<dbReference type="AGR" id="HGNC:4487"/>
<dbReference type="CTD" id="2854"/>
<dbReference type="DisGeNET" id="2854"/>
<dbReference type="GeneCards" id="GPR32"/>
<dbReference type="HGNC" id="HGNC:4487">
    <property type="gene designation" value="GPR32"/>
</dbReference>
<dbReference type="HPA" id="ENSG00000142511">
    <property type="expression patterns" value="Tissue enriched (parathyroid)"/>
</dbReference>
<dbReference type="MIM" id="603195">
    <property type="type" value="gene"/>
</dbReference>
<dbReference type="neXtProt" id="NX_O75388"/>
<dbReference type="OpenTargets" id="ENSG00000142511"/>
<dbReference type="PharmGKB" id="PA28875"/>
<dbReference type="VEuPathDB" id="HostDB:ENSG00000142511"/>
<dbReference type="eggNOG" id="ENOG502SYVA">
    <property type="taxonomic scope" value="Eukaryota"/>
</dbReference>
<dbReference type="GeneTree" id="ENSGT01020000230438"/>
<dbReference type="HOGENOM" id="CLU_009579_8_0_1"/>
<dbReference type="InParanoid" id="O75388"/>
<dbReference type="OMA" id="WACKLYI"/>
<dbReference type="OrthoDB" id="6088892at2759"/>
<dbReference type="PAN-GO" id="O75388">
    <property type="GO annotations" value="7 GO annotations based on evolutionary models"/>
</dbReference>
<dbReference type="PhylomeDB" id="O75388"/>
<dbReference type="TreeFam" id="TF341723"/>
<dbReference type="PathwayCommons" id="O75388"/>
<dbReference type="Reactome" id="R-HSA-418555">
    <property type="pathway name" value="G alpha (s) signalling events"/>
</dbReference>
<dbReference type="BioGRID-ORCS" id="2854">
    <property type="hits" value="13 hits in 1136 CRISPR screens"/>
</dbReference>
<dbReference type="ChiTaRS" id="GPR32">
    <property type="organism name" value="human"/>
</dbReference>
<dbReference type="GeneWiki" id="GPR32"/>
<dbReference type="GenomeRNAi" id="2854"/>
<dbReference type="Pharos" id="O75388">
    <property type="development level" value="Tchem"/>
</dbReference>
<dbReference type="PRO" id="PR:O75388"/>
<dbReference type="Proteomes" id="UP000005640">
    <property type="component" value="Chromosome 19"/>
</dbReference>
<dbReference type="RNAct" id="O75388">
    <property type="molecule type" value="protein"/>
</dbReference>
<dbReference type="Bgee" id="ENSG00000142511">
    <property type="expression patterns" value="Expressed in adrenal tissue and 2 other cell types or tissues"/>
</dbReference>
<dbReference type="ExpressionAtlas" id="O75388">
    <property type="expression patterns" value="baseline and differential"/>
</dbReference>
<dbReference type="GO" id="GO:0005886">
    <property type="term" value="C:plasma membrane"/>
    <property type="evidence" value="ECO:0000318"/>
    <property type="project" value="GO_Central"/>
</dbReference>
<dbReference type="GO" id="GO:0004875">
    <property type="term" value="F:complement receptor activity"/>
    <property type="evidence" value="ECO:0000318"/>
    <property type="project" value="GO_Central"/>
</dbReference>
<dbReference type="GO" id="GO:0004930">
    <property type="term" value="F:G protein-coupled receptor activity"/>
    <property type="evidence" value="ECO:0000304"/>
    <property type="project" value="ProtInc"/>
</dbReference>
<dbReference type="GO" id="GO:0004982">
    <property type="term" value="F:N-formyl peptide receptor activity"/>
    <property type="evidence" value="ECO:0000318"/>
    <property type="project" value="GO_Central"/>
</dbReference>
<dbReference type="GO" id="GO:0002430">
    <property type="term" value="P:complement receptor mediated signaling pathway"/>
    <property type="evidence" value="ECO:0000318"/>
    <property type="project" value="GO_Central"/>
</dbReference>
<dbReference type="GO" id="GO:0007186">
    <property type="term" value="P:G protein-coupled receptor signaling pathway"/>
    <property type="evidence" value="ECO:0000304"/>
    <property type="project" value="ProtInc"/>
</dbReference>
<dbReference type="GO" id="GO:0006954">
    <property type="term" value="P:inflammatory response"/>
    <property type="evidence" value="ECO:0000318"/>
    <property type="project" value="GO_Central"/>
</dbReference>
<dbReference type="GO" id="GO:0007200">
    <property type="term" value="P:phospholipase C-activating G protein-coupled receptor signaling pathway"/>
    <property type="evidence" value="ECO:0000318"/>
    <property type="project" value="GO_Central"/>
</dbReference>
<dbReference type="GO" id="GO:0007204">
    <property type="term" value="P:positive regulation of cytosolic calcium ion concentration"/>
    <property type="evidence" value="ECO:0000318"/>
    <property type="project" value="GO_Central"/>
</dbReference>
<dbReference type="CDD" id="cd15117">
    <property type="entry name" value="7tmA_FPR-like"/>
    <property type="match status" value="1"/>
</dbReference>
<dbReference type="FunFam" id="1.20.1070.10:FF:000315">
    <property type="entry name" value="G protein-coupled receptor 32"/>
    <property type="match status" value="1"/>
</dbReference>
<dbReference type="Gene3D" id="1.20.1070.10">
    <property type="entry name" value="Rhodopsin 7-helix transmembrane proteins"/>
    <property type="match status" value="1"/>
</dbReference>
<dbReference type="InterPro" id="IPR000826">
    <property type="entry name" value="Formyl_rcpt-rel"/>
</dbReference>
<dbReference type="InterPro" id="IPR000276">
    <property type="entry name" value="GPCR_Rhodpsn"/>
</dbReference>
<dbReference type="InterPro" id="IPR017452">
    <property type="entry name" value="GPCR_Rhodpsn_7TM"/>
</dbReference>
<dbReference type="PANTHER" id="PTHR24225">
    <property type="entry name" value="CHEMOTACTIC RECEPTOR"/>
    <property type="match status" value="1"/>
</dbReference>
<dbReference type="PANTHER" id="PTHR24225:SF27">
    <property type="entry name" value="G-PROTEIN COUPLED RECEPTOR 32-RELATED"/>
    <property type="match status" value="1"/>
</dbReference>
<dbReference type="Pfam" id="PF00001">
    <property type="entry name" value="7tm_1"/>
    <property type="match status" value="1"/>
</dbReference>
<dbReference type="PRINTS" id="PR00526">
    <property type="entry name" value="FMETLEUPHER"/>
</dbReference>
<dbReference type="PRINTS" id="PR00237">
    <property type="entry name" value="GPCRRHODOPSN"/>
</dbReference>
<dbReference type="SUPFAM" id="SSF81321">
    <property type="entry name" value="Family A G protein-coupled receptor-like"/>
    <property type="match status" value="1"/>
</dbReference>
<dbReference type="PROSITE" id="PS00237">
    <property type="entry name" value="G_PROTEIN_RECEP_F1_1"/>
    <property type="match status" value="1"/>
</dbReference>
<dbReference type="PROSITE" id="PS50262">
    <property type="entry name" value="G_PROTEIN_RECEP_F1_2"/>
    <property type="match status" value="1"/>
</dbReference>
<proteinExistence type="evidence at protein level"/>
<reference key="1">
    <citation type="journal article" date="1998" name="Genomics">
        <title>Cloning genes encoding receptors related to chemoattractant receptors.</title>
        <authorList>
            <person name="Marchese A."/>
            <person name="Nguyen T."/>
            <person name="Malik P."/>
            <person name="Xu S."/>
            <person name="Cheng R."/>
            <person name="Xie Z."/>
            <person name="Heng H.H.Q."/>
            <person name="George S.R."/>
            <person name="Kolakowski L.F. Jr."/>
            <person name="O'Dowd B.F."/>
        </authorList>
    </citation>
    <scope>NUCLEOTIDE SEQUENCE [GENOMIC DNA]</scope>
</reference>
<reference key="2">
    <citation type="journal article" date="2004" name="Genome Res.">
        <title>The status, quality, and expansion of the NIH full-length cDNA project: the Mammalian Gene Collection (MGC).</title>
        <authorList>
            <consortium name="The MGC Project Team"/>
        </authorList>
    </citation>
    <scope>NUCLEOTIDE SEQUENCE [LARGE SCALE MRNA]</scope>
</reference>
<reference key="3">
    <citation type="journal article" date="2010" name="Proc. Natl. Acad. Sci. U.S.A.">
        <title>Resolvin D1 binds human phagocytes with evidence for proresolving receptors.</title>
        <authorList>
            <person name="Krishnamoorthy S."/>
            <person name="Recchiuti A."/>
            <person name="Chiang N."/>
            <person name="Yacoubian S."/>
            <person name="Lee C.H."/>
            <person name="Yang R."/>
            <person name="Petasis N.A."/>
            <person name="Serhan C.N."/>
        </authorList>
    </citation>
    <scope>FUNCTION</scope>
</reference>
<reference key="4">
    <citation type="journal article" date="2013" name="Mucosal Immunol.">
        <title>Resolvin D1 and aspirin-triggered resolvin D1 regulate histamine-stimulated conjunctival goblet cell secretion.</title>
        <authorList>
            <person name="Li D."/>
            <person name="Hodges R.R."/>
            <person name="Jiao J."/>
            <person name="Carozza R.B."/>
            <person name="Shatos M.A."/>
            <person name="Chiang N."/>
            <person name="Serhan C.N."/>
            <person name="Dartt D.A."/>
        </authorList>
    </citation>
    <scope>FUNCTION</scope>
</reference>
<reference key="5">
    <citation type="journal article" date="2016" name="J. Immunol.">
        <title>Resolvin D1 Polarizes Primary Human Macrophages toward a Proresolution Phenotype through GPR32.</title>
        <authorList>
            <person name="Schmid M."/>
            <person name="Gemperle C."/>
            <person name="Rimann N."/>
            <person name="Hersberger M."/>
        </authorList>
    </citation>
    <scope>FUNCTION</scope>
    <scope>TISSUE SPECIFICITY</scope>
</reference>
<gene>
    <name type="primary">GPR32</name>
</gene>
<accession>O75388</accession>
<accession>Q502U7</accession>
<accession>Q6NWS5</accession>
<name>GPR32_HUMAN</name>
<organism>
    <name type="scientific">Homo sapiens</name>
    <name type="common">Human</name>
    <dbReference type="NCBI Taxonomy" id="9606"/>
    <lineage>
        <taxon>Eukaryota</taxon>
        <taxon>Metazoa</taxon>
        <taxon>Chordata</taxon>
        <taxon>Craniata</taxon>
        <taxon>Vertebrata</taxon>
        <taxon>Euteleostomi</taxon>
        <taxon>Mammalia</taxon>
        <taxon>Eutheria</taxon>
        <taxon>Euarchontoglires</taxon>
        <taxon>Primates</taxon>
        <taxon>Haplorrhini</taxon>
        <taxon>Catarrhini</taxon>
        <taxon>Hominidae</taxon>
        <taxon>Homo</taxon>
    </lineage>
</organism>
<comment type="function">
    <text evidence="3 4 5">G-protein coupled receptor that binds to several ligands including resolvin D1 (RvD1) with high affinity, leading to rapid and transient activation of numerous intracellular signaling pathways. In macrophages, enhances the RvD1-stimulated phagocytic and clearance functions (PubMed:20080636). Macrophages migrate less toward different chemoattractant stimuli but phagocytose more microbial particles (PubMed:26969756). Prevents the increase in Ca(2+) and activation of ERK1/2 used by histamine and its H1 receptor subtype to induce goblet cell secretion by activating PKC and GRK2 to counter-regulate the histamine receptor (PubMed:23462912).</text>
</comment>
<comment type="subcellular location">
    <subcellularLocation>
        <location>Cell membrane</location>
        <topology>Multi-pass membrane protein</topology>
    </subcellularLocation>
</comment>
<comment type="tissue specificity">
    <text evidence="5">Expressed in resting primary human macrophages.</text>
</comment>
<comment type="similarity">
    <text evidence="2">Belongs to the G-protein coupled receptor 1 family.</text>
</comment>
<sequence>MNGVSEGTRGCSDRQPGVLTRDRSCSRKMNSSGCLSEEVGSLRPLTVVILSASIVVGVLGNGLVLWMTVFRMARTVSTVCFFHLALADFMLSLSLPIAMYYIVSRQWLLGEWACKLYITFVFLSYFASNCLLVFISVDRCISVLYPVWALNHRTVQRASWLAFGVWLLAAALCSAHLKFRTTRKWNGCTHCYLAFNSDNETAQIWIEGVVEGHIIGTIGHFLLGFLGPLAIIGTCAHLIRAKLLREGWVHANRPKRLLLVLVSAFFIFWSPFNVVLLVHLWRRVMLKEIYHPRMLLILQASFALGCVNSSLNPFLYVFVGRDFQEKFFQSLTSALARAFGEEEFLSSCPRGNAPRE</sequence>
<feature type="chain" id="PRO_0000069552" description="Probable G-protein coupled receptor 32">
    <location>
        <begin position="1"/>
        <end position="356"/>
    </location>
</feature>
<feature type="topological domain" description="Extracellular" evidence="1">
    <location>
        <begin position="1"/>
        <end position="44"/>
    </location>
</feature>
<feature type="transmembrane region" description="Helical; Name=1" evidence="1">
    <location>
        <begin position="45"/>
        <end position="67"/>
    </location>
</feature>
<feature type="topological domain" description="Cytoplasmic" evidence="1">
    <location>
        <begin position="68"/>
        <end position="78"/>
    </location>
</feature>
<feature type="transmembrane region" description="Helical; Name=2" evidence="1">
    <location>
        <begin position="79"/>
        <end position="100"/>
    </location>
</feature>
<feature type="topological domain" description="Extracellular" evidence="1">
    <location>
        <begin position="101"/>
        <end position="116"/>
    </location>
</feature>
<feature type="transmembrane region" description="Helical; Name=3" evidence="1">
    <location>
        <begin position="117"/>
        <end position="137"/>
    </location>
</feature>
<feature type="topological domain" description="Cytoplasmic" evidence="1">
    <location>
        <begin position="138"/>
        <end position="156"/>
    </location>
</feature>
<feature type="transmembrane region" description="Helical; Name=4" evidence="1">
    <location>
        <begin position="157"/>
        <end position="178"/>
    </location>
</feature>
<feature type="topological domain" description="Extracellular" evidence="1">
    <location>
        <begin position="179"/>
        <end position="220"/>
    </location>
</feature>
<feature type="transmembrane region" description="Helical; Name=5" evidence="1">
    <location>
        <begin position="221"/>
        <end position="241"/>
    </location>
</feature>
<feature type="topological domain" description="Cytoplasmic" evidence="1">
    <location>
        <begin position="242"/>
        <end position="257"/>
    </location>
</feature>
<feature type="transmembrane region" description="Helical; Name=6" evidence="1">
    <location>
        <begin position="258"/>
        <end position="280"/>
    </location>
</feature>
<feature type="topological domain" description="Extracellular" evidence="1">
    <location>
        <begin position="281"/>
        <end position="300"/>
    </location>
</feature>
<feature type="transmembrane region" description="Helical; Name=7" evidence="1">
    <location>
        <begin position="301"/>
        <end position="320"/>
    </location>
</feature>
<feature type="topological domain" description="Cytoplasmic" evidence="1">
    <location>
        <begin position="321"/>
        <end position="356"/>
    </location>
</feature>
<feature type="glycosylation site" description="N-linked (GlcNAc...) asparagine" evidence="1">
    <location>
        <position position="30"/>
    </location>
</feature>
<feature type="glycosylation site" description="N-linked (GlcNAc...) asparagine" evidence="1">
    <location>
        <position position="199"/>
    </location>
</feature>
<feature type="disulfide bond" evidence="2">
    <location>
        <begin position="114"/>
        <end position="191"/>
    </location>
</feature>
<feature type="sequence variant" id="VAR_011860" description="In dbSNP:rs1864011.">
    <original>F</original>
    <variation>L</variation>
    <location>
        <position position="327"/>
    </location>
</feature>
<feature type="sequence conflict" description="In Ref. 2; AAH67453." evidence="6" ref="2">
    <original>L</original>
    <variation>P</variation>
    <location>
        <position position="167"/>
    </location>
</feature>
<feature type="sequence conflict" description="In Ref. 2; AAH67453." evidence="6" ref="2">
    <original>N</original>
    <variation>D</variation>
    <location>
        <position position="186"/>
    </location>
</feature>